<protein>
    <recommendedName>
        <fullName evidence="1">Peptide deformylase</fullName>
        <shortName evidence="1">PDF</shortName>
        <ecNumber evidence="1">3.5.1.88</ecNumber>
    </recommendedName>
    <alternativeName>
        <fullName evidence="1">Polypeptide deformylase</fullName>
    </alternativeName>
</protein>
<keyword id="KW-0378">Hydrolase</keyword>
<keyword id="KW-0408">Iron</keyword>
<keyword id="KW-0479">Metal-binding</keyword>
<keyword id="KW-0648">Protein biosynthesis</keyword>
<sequence length="204" mass="22862">MSAQDKLIKPSHLITMDDIIREGNPTLRAVAKEVSLPLCDEDILLGEKMMQFLKHSQDPVMAEKLGLRAGVGLAAPQIDVSKRIIAVLVPNLPDKEGNPPKEAYSWQEVLYNPKIVSHSVQDAALSDGEGCLSVDRVVEGYVVRHARVTVDYYDKEGQQHRIKLKGYNAIVVQHEIDHINGVLFYDRINAKNPFETKEELLILD</sequence>
<dbReference type="EC" id="3.5.1.88" evidence="1"/>
<dbReference type="EMBL" id="CP000056">
    <property type="protein sequence ID" value="AAX72767.1"/>
    <property type="molecule type" value="Genomic_DNA"/>
</dbReference>
<dbReference type="RefSeq" id="WP_002982624.1">
    <property type="nucleotide sequence ID" value="NC_007296.2"/>
</dbReference>
<dbReference type="SMR" id="Q48R93"/>
<dbReference type="GeneID" id="69901455"/>
<dbReference type="KEGG" id="spb:M28_Spy1657"/>
<dbReference type="HOGENOM" id="CLU_061901_4_0_9"/>
<dbReference type="GO" id="GO:0046872">
    <property type="term" value="F:metal ion binding"/>
    <property type="evidence" value="ECO:0007669"/>
    <property type="project" value="UniProtKB-KW"/>
</dbReference>
<dbReference type="GO" id="GO:0042586">
    <property type="term" value="F:peptide deformylase activity"/>
    <property type="evidence" value="ECO:0007669"/>
    <property type="project" value="UniProtKB-UniRule"/>
</dbReference>
<dbReference type="GO" id="GO:0043686">
    <property type="term" value="P:co-translational protein modification"/>
    <property type="evidence" value="ECO:0007669"/>
    <property type="project" value="TreeGrafter"/>
</dbReference>
<dbReference type="GO" id="GO:0006412">
    <property type="term" value="P:translation"/>
    <property type="evidence" value="ECO:0007669"/>
    <property type="project" value="UniProtKB-UniRule"/>
</dbReference>
<dbReference type="CDD" id="cd00487">
    <property type="entry name" value="Pep_deformylase"/>
    <property type="match status" value="1"/>
</dbReference>
<dbReference type="FunFam" id="3.90.45.10:FF:000002">
    <property type="entry name" value="Peptide deformylase"/>
    <property type="match status" value="1"/>
</dbReference>
<dbReference type="Gene3D" id="3.90.45.10">
    <property type="entry name" value="Peptide deformylase"/>
    <property type="match status" value="1"/>
</dbReference>
<dbReference type="HAMAP" id="MF_00163">
    <property type="entry name" value="Pep_deformylase"/>
    <property type="match status" value="1"/>
</dbReference>
<dbReference type="InterPro" id="IPR023635">
    <property type="entry name" value="Peptide_deformylase"/>
</dbReference>
<dbReference type="InterPro" id="IPR036821">
    <property type="entry name" value="Peptide_deformylase_sf"/>
</dbReference>
<dbReference type="NCBIfam" id="TIGR00079">
    <property type="entry name" value="pept_deformyl"/>
    <property type="match status" value="1"/>
</dbReference>
<dbReference type="PANTHER" id="PTHR10458">
    <property type="entry name" value="PEPTIDE DEFORMYLASE"/>
    <property type="match status" value="1"/>
</dbReference>
<dbReference type="PANTHER" id="PTHR10458:SF8">
    <property type="entry name" value="PEPTIDE DEFORMYLASE 2"/>
    <property type="match status" value="1"/>
</dbReference>
<dbReference type="Pfam" id="PF01327">
    <property type="entry name" value="Pep_deformylase"/>
    <property type="match status" value="1"/>
</dbReference>
<dbReference type="PIRSF" id="PIRSF004749">
    <property type="entry name" value="Pep_def"/>
    <property type="match status" value="1"/>
</dbReference>
<dbReference type="PRINTS" id="PR01576">
    <property type="entry name" value="PDEFORMYLASE"/>
</dbReference>
<dbReference type="SUPFAM" id="SSF56420">
    <property type="entry name" value="Peptide deformylase"/>
    <property type="match status" value="1"/>
</dbReference>
<evidence type="ECO:0000255" key="1">
    <source>
        <dbReference type="HAMAP-Rule" id="MF_00163"/>
    </source>
</evidence>
<accession>Q48R93</accession>
<gene>
    <name evidence="1" type="primary">def</name>
    <name type="ordered locus">M28_Spy1657</name>
</gene>
<organism>
    <name type="scientific">Streptococcus pyogenes serotype M28 (strain MGAS6180)</name>
    <dbReference type="NCBI Taxonomy" id="319701"/>
    <lineage>
        <taxon>Bacteria</taxon>
        <taxon>Bacillati</taxon>
        <taxon>Bacillota</taxon>
        <taxon>Bacilli</taxon>
        <taxon>Lactobacillales</taxon>
        <taxon>Streptococcaceae</taxon>
        <taxon>Streptococcus</taxon>
    </lineage>
</organism>
<reference key="1">
    <citation type="journal article" date="2005" name="J. Infect. Dis.">
        <title>Genome sequence of a serotype M28 strain of group A Streptococcus: potential new insights into puerperal sepsis and bacterial disease specificity.</title>
        <authorList>
            <person name="Green N.M."/>
            <person name="Zhang S."/>
            <person name="Porcella S.F."/>
            <person name="Nagiec M.J."/>
            <person name="Barbian K.D."/>
            <person name="Beres S.B."/>
            <person name="Lefebvre R.B."/>
            <person name="Musser J.M."/>
        </authorList>
    </citation>
    <scope>NUCLEOTIDE SEQUENCE [LARGE SCALE GENOMIC DNA]</scope>
    <source>
        <strain>MGAS6180</strain>
    </source>
</reference>
<feature type="chain" id="PRO_0000301106" description="Peptide deformylase">
    <location>
        <begin position="1"/>
        <end position="204"/>
    </location>
</feature>
<feature type="active site" evidence="1">
    <location>
        <position position="175"/>
    </location>
</feature>
<feature type="binding site" evidence="1">
    <location>
        <position position="131"/>
    </location>
    <ligand>
        <name>Fe cation</name>
        <dbReference type="ChEBI" id="CHEBI:24875"/>
    </ligand>
</feature>
<feature type="binding site" evidence="1">
    <location>
        <position position="174"/>
    </location>
    <ligand>
        <name>Fe cation</name>
        <dbReference type="ChEBI" id="CHEBI:24875"/>
    </ligand>
</feature>
<feature type="binding site" evidence="1">
    <location>
        <position position="178"/>
    </location>
    <ligand>
        <name>Fe cation</name>
        <dbReference type="ChEBI" id="CHEBI:24875"/>
    </ligand>
</feature>
<proteinExistence type="inferred from homology"/>
<name>DEF_STRPM</name>
<comment type="function">
    <text evidence="1">Removes the formyl group from the N-terminal Met of newly synthesized proteins. Requires at least a dipeptide for an efficient rate of reaction. N-terminal L-methionine is a prerequisite for activity but the enzyme has broad specificity at other positions.</text>
</comment>
<comment type="catalytic activity">
    <reaction evidence="1">
        <text>N-terminal N-formyl-L-methionyl-[peptide] + H2O = N-terminal L-methionyl-[peptide] + formate</text>
        <dbReference type="Rhea" id="RHEA:24420"/>
        <dbReference type="Rhea" id="RHEA-COMP:10639"/>
        <dbReference type="Rhea" id="RHEA-COMP:10640"/>
        <dbReference type="ChEBI" id="CHEBI:15377"/>
        <dbReference type="ChEBI" id="CHEBI:15740"/>
        <dbReference type="ChEBI" id="CHEBI:49298"/>
        <dbReference type="ChEBI" id="CHEBI:64731"/>
        <dbReference type="EC" id="3.5.1.88"/>
    </reaction>
</comment>
<comment type="cofactor">
    <cofactor evidence="1">
        <name>Fe(2+)</name>
        <dbReference type="ChEBI" id="CHEBI:29033"/>
    </cofactor>
    <text evidence="1">Binds 1 Fe(2+) ion.</text>
</comment>
<comment type="similarity">
    <text evidence="1">Belongs to the polypeptide deformylase family.</text>
</comment>